<gene>
    <name evidence="1" type="primary">fbp</name>
    <name type="ordered locus">SEN4184</name>
</gene>
<accession>B5R0U4</accession>
<dbReference type="EC" id="3.1.3.11" evidence="1"/>
<dbReference type="EMBL" id="AM933172">
    <property type="protein sequence ID" value="CAR35743.1"/>
    <property type="molecule type" value="Genomic_DNA"/>
</dbReference>
<dbReference type="RefSeq" id="WP_000853764.1">
    <property type="nucleotide sequence ID" value="NC_011294.1"/>
</dbReference>
<dbReference type="SMR" id="B5R0U4"/>
<dbReference type="KEGG" id="set:SEN4184"/>
<dbReference type="HOGENOM" id="CLU_039977_2_2_6"/>
<dbReference type="UniPathway" id="UPA00138"/>
<dbReference type="Proteomes" id="UP000000613">
    <property type="component" value="Chromosome"/>
</dbReference>
<dbReference type="GO" id="GO:0005829">
    <property type="term" value="C:cytosol"/>
    <property type="evidence" value="ECO:0007669"/>
    <property type="project" value="TreeGrafter"/>
</dbReference>
<dbReference type="GO" id="GO:0042132">
    <property type="term" value="F:fructose 1,6-bisphosphate 1-phosphatase activity"/>
    <property type="evidence" value="ECO:0007669"/>
    <property type="project" value="UniProtKB-UniRule"/>
</dbReference>
<dbReference type="GO" id="GO:0000287">
    <property type="term" value="F:magnesium ion binding"/>
    <property type="evidence" value="ECO:0007669"/>
    <property type="project" value="UniProtKB-UniRule"/>
</dbReference>
<dbReference type="GO" id="GO:0030388">
    <property type="term" value="P:fructose 1,6-bisphosphate metabolic process"/>
    <property type="evidence" value="ECO:0007669"/>
    <property type="project" value="TreeGrafter"/>
</dbReference>
<dbReference type="GO" id="GO:0006002">
    <property type="term" value="P:fructose 6-phosphate metabolic process"/>
    <property type="evidence" value="ECO:0007669"/>
    <property type="project" value="TreeGrafter"/>
</dbReference>
<dbReference type="GO" id="GO:0006000">
    <property type="term" value="P:fructose metabolic process"/>
    <property type="evidence" value="ECO:0007669"/>
    <property type="project" value="TreeGrafter"/>
</dbReference>
<dbReference type="GO" id="GO:0006094">
    <property type="term" value="P:gluconeogenesis"/>
    <property type="evidence" value="ECO:0007669"/>
    <property type="project" value="UniProtKB-UniRule"/>
</dbReference>
<dbReference type="GO" id="GO:0005986">
    <property type="term" value="P:sucrose biosynthetic process"/>
    <property type="evidence" value="ECO:0007669"/>
    <property type="project" value="TreeGrafter"/>
</dbReference>
<dbReference type="CDD" id="cd00354">
    <property type="entry name" value="FBPase"/>
    <property type="match status" value="1"/>
</dbReference>
<dbReference type="FunFam" id="3.30.540.10:FF:000002">
    <property type="entry name" value="Fructose-1,6-bisphosphatase class 1"/>
    <property type="match status" value="1"/>
</dbReference>
<dbReference type="FunFam" id="3.40.190.80:FF:000001">
    <property type="entry name" value="Fructose-1,6-bisphosphatase class 1"/>
    <property type="match status" value="1"/>
</dbReference>
<dbReference type="Gene3D" id="3.40.190.80">
    <property type="match status" value="1"/>
</dbReference>
<dbReference type="Gene3D" id="3.30.540.10">
    <property type="entry name" value="Fructose-1,6-Bisphosphatase, subunit A, domain 1"/>
    <property type="match status" value="1"/>
</dbReference>
<dbReference type="HAMAP" id="MF_01855">
    <property type="entry name" value="FBPase_class1"/>
    <property type="match status" value="1"/>
</dbReference>
<dbReference type="InterPro" id="IPR044015">
    <property type="entry name" value="FBPase_C_dom"/>
</dbReference>
<dbReference type="InterPro" id="IPR000146">
    <property type="entry name" value="FBPase_class-1"/>
</dbReference>
<dbReference type="InterPro" id="IPR033391">
    <property type="entry name" value="FBPase_N"/>
</dbReference>
<dbReference type="InterPro" id="IPR028343">
    <property type="entry name" value="FBPtase"/>
</dbReference>
<dbReference type="InterPro" id="IPR020548">
    <property type="entry name" value="Fructose_bisphosphatase_AS"/>
</dbReference>
<dbReference type="NCBIfam" id="NF006778">
    <property type="entry name" value="PRK09293.1-1"/>
    <property type="match status" value="1"/>
</dbReference>
<dbReference type="NCBIfam" id="NF006779">
    <property type="entry name" value="PRK09293.1-3"/>
    <property type="match status" value="1"/>
</dbReference>
<dbReference type="PANTHER" id="PTHR11556">
    <property type="entry name" value="FRUCTOSE-1,6-BISPHOSPHATASE-RELATED"/>
    <property type="match status" value="1"/>
</dbReference>
<dbReference type="PANTHER" id="PTHR11556:SF35">
    <property type="entry name" value="SEDOHEPTULOSE-1,7-BISPHOSPHATASE, CHLOROPLASTIC"/>
    <property type="match status" value="1"/>
</dbReference>
<dbReference type="Pfam" id="PF00316">
    <property type="entry name" value="FBPase"/>
    <property type="match status" value="1"/>
</dbReference>
<dbReference type="Pfam" id="PF18913">
    <property type="entry name" value="FBPase_C"/>
    <property type="match status" value="1"/>
</dbReference>
<dbReference type="PIRSF" id="PIRSF500210">
    <property type="entry name" value="FBPtase"/>
    <property type="match status" value="1"/>
</dbReference>
<dbReference type="PIRSF" id="PIRSF000904">
    <property type="entry name" value="FBPtase_SBPase"/>
    <property type="match status" value="1"/>
</dbReference>
<dbReference type="PRINTS" id="PR00115">
    <property type="entry name" value="F16BPHPHTASE"/>
</dbReference>
<dbReference type="SUPFAM" id="SSF56655">
    <property type="entry name" value="Carbohydrate phosphatase"/>
    <property type="match status" value="1"/>
</dbReference>
<dbReference type="PROSITE" id="PS00124">
    <property type="entry name" value="FBPASE"/>
    <property type="match status" value="1"/>
</dbReference>
<protein>
    <recommendedName>
        <fullName evidence="1">Fructose-1,6-bisphosphatase class 1</fullName>
        <shortName evidence="1">FBPase class 1</shortName>
        <ecNumber evidence="1">3.1.3.11</ecNumber>
    </recommendedName>
    <alternativeName>
        <fullName evidence="1">D-fructose-1,6-bisphosphate 1-phosphohydrolase class 1</fullName>
    </alternativeName>
</protein>
<sequence>MKTLGEFIVEKQHEFSQATGELTALLSAIKLGAKIIHRDINKAGLVDILGASGAENVQGEVQQKLDLFANEKLKAALKARDIVAGIASEEEDEIVVFEGCEHAKYVVLMDPLDGSSNIDVNVSVGTIFSIYRRVTPVGTPVTEEDFLQPGNKQVAAGYVVYGSSTMLVYTTGCGVHAFTYDPSLGVFCLCQERMRFPEKGKTYSINEGNYIKFPNGVKKYIKFCQEEDSSTSRPYTSRYIGSLVADFHRNLLKGGIYLYPSTASHPQGKLRLLYECNPMAFLAEQAGGKASDGKERILDIIPESLHQRRSFFVGNRHMVDDVERFIREYPDA</sequence>
<proteinExistence type="inferred from homology"/>
<organism>
    <name type="scientific">Salmonella enteritidis PT4 (strain P125109)</name>
    <dbReference type="NCBI Taxonomy" id="550537"/>
    <lineage>
        <taxon>Bacteria</taxon>
        <taxon>Pseudomonadati</taxon>
        <taxon>Pseudomonadota</taxon>
        <taxon>Gammaproteobacteria</taxon>
        <taxon>Enterobacterales</taxon>
        <taxon>Enterobacteriaceae</taxon>
        <taxon>Salmonella</taxon>
    </lineage>
</organism>
<evidence type="ECO:0000255" key="1">
    <source>
        <dbReference type="HAMAP-Rule" id="MF_01855"/>
    </source>
</evidence>
<comment type="catalytic activity">
    <reaction evidence="1">
        <text>beta-D-fructose 1,6-bisphosphate + H2O = beta-D-fructose 6-phosphate + phosphate</text>
        <dbReference type="Rhea" id="RHEA:11064"/>
        <dbReference type="ChEBI" id="CHEBI:15377"/>
        <dbReference type="ChEBI" id="CHEBI:32966"/>
        <dbReference type="ChEBI" id="CHEBI:43474"/>
        <dbReference type="ChEBI" id="CHEBI:57634"/>
        <dbReference type="EC" id="3.1.3.11"/>
    </reaction>
</comment>
<comment type="cofactor">
    <cofactor evidence="1">
        <name>Mg(2+)</name>
        <dbReference type="ChEBI" id="CHEBI:18420"/>
    </cofactor>
    <text evidence="1">Binds 2 magnesium ions per subunit.</text>
</comment>
<comment type="pathway">
    <text evidence="1">Carbohydrate biosynthesis; gluconeogenesis.</text>
</comment>
<comment type="subunit">
    <text evidence="1">Homotetramer.</text>
</comment>
<comment type="subcellular location">
    <subcellularLocation>
        <location evidence="1">Cytoplasm</location>
    </subcellularLocation>
</comment>
<comment type="similarity">
    <text evidence="1">Belongs to the FBPase class 1 family.</text>
</comment>
<reference key="1">
    <citation type="journal article" date="2008" name="Genome Res.">
        <title>Comparative genome analysis of Salmonella enteritidis PT4 and Salmonella gallinarum 287/91 provides insights into evolutionary and host adaptation pathways.</title>
        <authorList>
            <person name="Thomson N.R."/>
            <person name="Clayton D.J."/>
            <person name="Windhorst D."/>
            <person name="Vernikos G."/>
            <person name="Davidson S."/>
            <person name="Churcher C."/>
            <person name="Quail M.A."/>
            <person name="Stevens M."/>
            <person name="Jones M.A."/>
            <person name="Watson M."/>
            <person name="Barron A."/>
            <person name="Layton A."/>
            <person name="Pickard D."/>
            <person name="Kingsley R.A."/>
            <person name="Bignell A."/>
            <person name="Clark L."/>
            <person name="Harris B."/>
            <person name="Ormond D."/>
            <person name="Abdellah Z."/>
            <person name="Brooks K."/>
            <person name="Cherevach I."/>
            <person name="Chillingworth T."/>
            <person name="Woodward J."/>
            <person name="Norberczak H."/>
            <person name="Lord A."/>
            <person name="Arrowsmith C."/>
            <person name="Jagels K."/>
            <person name="Moule S."/>
            <person name="Mungall K."/>
            <person name="Saunders M."/>
            <person name="Whitehead S."/>
            <person name="Chabalgoity J.A."/>
            <person name="Maskell D."/>
            <person name="Humphreys T."/>
            <person name="Roberts M."/>
            <person name="Barrow P.A."/>
            <person name="Dougan G."/>
            <person name="Parkhill J."/>
        </authorList>
    </citation>
    <scope>NUCLEOTIDE SEQUENCE [LARGE SCALE GENOMIC DNA]</scope>
    <source>
        <strain>P125109</strain>
    </source>
</reference>
<name>F16PA_SALEP</name>
<feature type="chain" id="PRO_0000364688" description="Fructose-1,6-bisphosphatase class 1">
    <location>
        <begin position="1"/>
        <end position="332"/>
    </location>
</feature>
<feature type="binding site" evidence="1">
    <location>
        <position position="89"/>
    </location>
    <ligand>
        <name>Mg(2+)</name>
        <dbReference type="ChEBI" id="CHEBI:18420"/>
        <label>1</label>
    </ligand>
</feature>
<feature type="binding site" evidence="1">
    <location>
        <position position="110"/>
    </location>
    <ligand>
        <name>Mg(2+)</name>
        <dbReference type="ChEBI" id="CHEBI:18420"/>
        <label>1</label>
    </ligand>
</feature>
<feature type="binding site" evidence="1">
    <location>
        <position position="110"/>
    </location>
    <ligand>
        <name>Mg(2+)</name>
        <dbReference type="ChEBI" id="CHEBI:18420"/>
        <label>2</label>
    </ligand>
</feature>
<feature type="binding site" evidence="1">
    <location>
        <position position="112"/>
    </location>
    <ligand>
        <name>Mg(2+)</name>
        <dbReference type="ChEBI" id="CHEBI:18420"/>
        <label>1</label>
    </ligand>
</feature>
<feature type="binding site" evidence="1">
    <location>
        <begin position="113"/>
        <end position="116"/>
    </location>
    <ligand>
        <name>substrate</name>
    </ligand>
</feature>
<feature type="binding site" evidence="1">
    <location>
        <position position="113"/>
    </location>
    <ligand>
        <name>Mg(2+)</name>
        <dbReference type="ChEBI" id="CHEBI:18420"/>
        <label>2</label>
    </ligand>
</feature>
<feature type="binding site" evidence="1">
    <location>
        <position position="206"/>
    </location>
    <ligand>
        <name>substrate</name>
    </ligand>
</feature>
<feature type="binding site" evidence="1">
    <location>
        <position position="239"/>
    </location>
    <ligand>
        <name>substrate</name>
    </ligand>
</feature>
<feature type="binding site" evidence="1">
    <location>
        <begin position="257"/>
        <end position="259"/>
    </location>
    <ligand>
        <name>substrate</name>
    </ligand>
</feature>
<feature type="binding site" evidence="1">
    <location>
        <position position="269"/>
    </location>
    <ligand>
        <name>substrate</name>
    </ligand>
</feature>
<feature type="binding site" evidence="1">
    <location>
        <position position="275"/>
    </location>
    <ligand>
        <name>Mg(2+)</name>
        <dbReference type="ChEBI" id="CHEBI:18420"/>
        <label>2</label>
    </ligand>
</feature>
<keyword id="KW-0119">Carbohydrate metabolism</keyword>
<keyword id="KW-0963">Cytoplasm</keyword>
<keyword id="KW-0378">Hydrolase</keyword>
<keyword id="KW-0460">Magnesium</keyword>
<keyword id="KW-0479">Metal-binding</keyword>